<feature type="chain" id="PRO_0000065092" description="Uncharacterized protein B0563.1">
    <location>
        <begin position="1"/>
        <end position="187"/>
    </location>
</feature>
<feature type="region of interest" description="Disordered" evidence="1">
    <location>
        <begin position="139"/>
        <end position="172"/>
    </location>
</feature>
<feature type="compositionally biased region" description="Basic and acidic residues" evidence="1">
    <location>
        <begin position="139"/>
        <end position="168"/>
    </location>
</feature>
<name>YT61_CAEEL</name>
<keyword id="KW-1185">Reference proteome</keyword>
<gene>
    <name type="ORF">B0563.1</name>
</gene>
<organism>
    <name type="scientific">Caenorhabditis elegans</name>
    <dbReference type="NCBI Taxonomy" id="6239"/>
    <lineage>
        <taxon>Eukaryota</taxon>
        <taxon>Metazoa</taxon>
        <taxon>Ecdysozoa</taxon>
        <taxon>Nematoda</taxon>
        <taxon>Chromadorea</taxon>
        <taxon>Rhabditida</taxon>
        <taxon>Rhabditina</taxon>
        <taxon>Rhabditomorpha</taxon>
        <taxon>Rhabditoidea</taxon>
        <taxon>Rhabditidae</taxon>
        <taxon>Peloderinae</taxon>
        <taxon>Caenorhabditis</taxon>
    </lineage>
</organism>
<evidence type="ECO:0000256" key="1">
    <source>
        <dbReference type="SAM" id="MobiDB-lite"/>
    </source>
</evidence>
<dbReference type="EMBL" id="FO080238">
    <property type="protein sequence ID" value="CCD62250.1"/>
    <property type="molecule type" value="Genomic_DNA"/>
</dbReference>
<dbReference type="PIR" id="T15362">
    <property type="entry name" value="T15362"/>
</dbReference>
<dbReference type="RefSeq" id="NP_509547.1">
    <property type="nucleotide sequence ID" value="NM_077146.2"/>
</dbReference>
<dbReference type="SMR" id="Q11078"/>
<dbReference type="FunCoup" id="Q11078">
    <property type="interactions" value="1522"/>
</dbReference>
<dbReference type="PaxDb" id="6239-B0563.1"/>
<dbReference type="EnsemblMetazoa" id="B0563.1.1">
    <property type="protein sequence ID" value="B0563.1.1"/>
    <property type="gene ID" value="WBGene00015261"/>
</dbReference>
<dbReference type="GeneID" id="182038"/>
<dbReference type="KEGG" id="cel:CELE_B0563.1"/>
<dbReference type="UCSC" id="B0563.1">
    <property type="organism name" value="c. elegans"/>
</dbReference>
<dbReference type="AGR" id="WB:WBGene00015261"/>
<dbReference type="CTD" id="182038"/>
<dbReference type="WormBase" id="B0563.1">
    <property type="protein sequence ID" value="CE02439"/>
    <property type="gene ID" value="WBGene00015261"/>
</dbReference>
<dbReference type="eggNOG" id="ENOG502RVJI">
    <property type="taxonomic scope" value="Eukaryota"/>
</dbReference>
<dbReference type="HOGENOM" id="CLU_120639_0_0_1"/>
<dbReference type="InParanoid" id="Q11078"/>
<dbReference type="OMA" id="YVIECWL"/>
<dbReference type="OrthoDB" id="5871567at2759"/>
<dbReference type="PRO" id="PR:Q11078"/>
<dbReference type="Proteomes" id="UP000001940">
    <property type="component" value="Chromosome X"/>
</dbReference>
<dbReference type="Bgee" id="WBGene00015261">
    <property type="expression patterns" value="Expressed in embryo and 2 other cell types or tissues"/>
</dbReference>
<sequence>MRFFNIFSSSFTSTAKWSCPNKLKISSEDIRNFKDTLIAMKGRRMNATAMRLLTNETNYKVTIEVSTKAIRALKKVIRRGVGQYQPGSKTDQLITSFKEVKQEYDEMILKMDIKMVPSKADYVIECWLKKDAAEKAAKESKDRKALKNAARKAEKNAHEESSYFRVDDPEPEPQNIYRIDPIIEIYV</sequence>
<accession>Q11078</accession>
<reference key="1">
    <citation type="journal article" date="1998" name="Science">
        <title>Genome sequence of the nematode C. elegans: a platform for investigating biology.</title>
        <authorList>
            <consortium name="The C. elegans sequencing consortium"/>
        </authorList>
    </citation>
    <scope>NUCLEOTIDE SEQUENCE [LARGE SCALE GENOMIC DNA]</scope>
    <source>
        <strain>Bristol N2</strain>
    </source>
</reference>
<protein>
    <recommendedName>
        <fullName>Uncharacterized protein B0563.1</fullName>
    </recommendedName>
</protein>
<proteinExistence type="predicted"/>